<proteinExistence type="inferred from homology"/>
<accession>P69379</accession>
<accession>O98694</accession>
<protein>
    <recommendedName>
        <fullName evidence="1">NAD(P)H-quinone oxidoreductase subunit 4L, chloroplastic</fullName>
        <ecNumber evidence="1">7.1.1.-</ecNumber>
    </recommendedName>
    <alternativeName>
        <fullName evidence="1">NAD(P)H dehydrogenase subunit 4L</fullName>
    </alternativeName>
    <alternativeName>
        <fullName evidence="1">NADH-plastoquinone oxidoreductase subunit 4L</fullName>
    </alternativeName>
</protein>
<keyword id="KW-0150">Chloroplast</keyword>
<keyword id="KW-0472">Membrane</keyword>
<keyword id="KW-0520">NAD</keyword>
<keyword id="KW-0521">NADP</keyword>
<keyword id="KW-0934">Plastid</keyword>
<keyword id="KW-0618">Plastoquinone</keyword>
<keyword id="KW-0874">Quinone</keyword>
<keyword id="KW-1185">Reference proteome</keyword>
<keyword id="KW-0793">Thylakoid</keyword>
<keyword id="KW-1278">Translocase</keyword>
<keyword id="KW-0812">Transmembrane</keyword>
<keyword id="KW-1133">Transmembrane helix</keyword>
<keyword id="KW-0813">Transport</keyword>
<evidence type="ECO:0000255" key="1">
    <source>
        <dbReference type="HAMAP-Rule" id="MF_01456"/>
    </source>
</evidence>
<name>NU4LC_WHEAT</name>
<organism>
    <name type="scientific">Triticum aestivum</name>
    <name type="common">Wheat</name>
    <dbReference type="NCBI Taxonomy" id="4565"/>
    <lineage>
        <taxon>Eukaryota</taxon>
        <taxon>Viridiplantae</taxon>
        <taxon>Streptophyta</taxon>
        <taxon>Embryophyta</taxon>
        <taxon>Tracheophyta</taxon>
        <taxon>Spermatophyta</taxon>
        <taxon>Magnoliopsida</taxon>
        <taxon>Liliopsida</taxon>
        <taxon>Poales</taxon>
        <taxon>Poaceae</taxon>
        <taxon>BOP clade</taxon>
        <taxon>Pooideae</taxon>
        <taxon>Triticodae</taxon>
        <taxon>Triticeae</taxon>
        <taxon>Triticinae</taxon>
        <taxon>Triticum</taxon>
    </lineage>
</organism>
<comment type="function">
    <text evidence="1">NDH shuttles electrons from NAD(P)H:plastoquinone, via FMN and iron-sulfur (Fe-S) centers, to quinones in the photosynthetic chain and possibly in a chloroplast respiratory chain. The immediate electron acceptor for the enzyme in this species is believed to be plastoquinone. Couples the redox reaction to proton translocation, and thus conserves the redox energy in a proton gradient.</text>
</comment>
<comment type="catalytic activity">
    <reaction evidence="1">
        <text>a plastoquinone + NADH + (n+1) H(+)(in) = a plastoquinol + NAD(+) + n H(+)(out)</text>
        <dbReference type="Rhea" id="RHEA:42608"/>
        <dbReference type="Rhea" id="RHEA-COMP:9561"/>
        <dbReference type="Rhea" id="RHEA-COMP:9562"/>
        <dbReference type="ChEBI" id="CHEBI:15378"/>
        <dbReference type="ChEBI" id="CHEBI:17757"/>
        <dbReference type="ChEBI" id="CHEBI:57540"/>
        <dbReference type="ChEBI" id="CHEBI:57945"/>
        <dbReference type="ChEBI" id="CHEBI:62192"/>
    </reaction>
</comment>
<comment type="catalytic activity">
    <reaction evidence="1">
        <text>a plastoquinone + NADPH + (n+1) H(+)(in) = a plastoquinol + NADP(+) + n H(+)(out)</text>
        <dbReference type="Rhea" id="RHEA:42612"/>
        <dbReference type="Rhea" id="RHEA-COMP:9561"/>
        <dbReference type="Rhea" id="RHEA-COMP:9562"/>
        <dbReference type="ChEBI" id="CHEBI:15378"/>
        <dbReference type="ChEBI" id="CHEBI:17757"/>
        <dbReference type="ChEBI" id="CHEBI:57783"/>
        <dbReference type="ChEBI" id="CHEBI:58349"/>
        <dbReference type="ChEBI" id="CHEBI:62192"/>
    </reaction>
</comment>
<comment type="subunit">
    <text evidence="1">NDH is composed of at least 16 different subunits, 5 of which are encoded in the nucleus.</text>
</comment>
<comment type="subcellular location">
    <subcellularLocation>
        <location evidence="1">Plastid</location>
        <location evidence="1">Chloroplast thylakoid membrane</location>
        <topology evidence="1">Multi-pass membrane protein</topology>
    </subcellularLocation>
</comment>
<comment type="similarity">
    <text evidence="1">Belongs to the complex I subunit 4L family.</text>
</comment>
<dbReference type="EC" id="7.1.1.-" evidence="1"/>
<dbReference type="EMBL" id="AB042240">
    <property type="protein sequence ID" value="BAB47087.1"/>
    <property type="molecule type" value="Genomic_DNA"/>
</dbReference>
<dbReference type="RefSeq" id="NP_114310.1">
    <property type="nucleotide sequence ID" value="NC_002762.1"/>
</dbReference>
<dbReference type="SMR" id="P69379"/>
<dbReference type="STRING" id="4565.P69379"/>
<dbReference type="PaxDb" id="4565-EPlTAEP00000010063"/>
<dbReference type="EnsemblPlants" id="TraesARI2D03G01119560.1">
    <property type="protein sequence ID" value="TraesARI2D03G01119560.1.CDS1"/>
    <property type="gene ID" value="TraesARI2D03G01119560"/>
</dbReference>
<dbReference type="EnsemblPlants" id="TraesARI2D03G01318960.1">
    <property type="protein sequence ID" value="TraesARI2D03G01318960.1.CDS1"/>
    <property type="gene ID" value="TraesARI2D03G01318960"/>
</dbReference>
<dbReference type="EnsemblPlants" id="TraesARI2D03G01325210.1">
    <property type="protein sequence ID" value="TraesARI2D03G01325210.1.CDS1"/>
    <property type="gene ID" value="TraesARI2D03G01325210"/>
</dbReference>
<dbReference type="EnsemblPlants" id="TraesARI5B03G02923520.1">
    <property type="protein sequence ID" value="TraesARI5B03G02923520.1.CDS1"/>
    <property type="gene ID" value="TraesARI5B03G02923520"/>
</dbReference>
<dbReference type="EnsemblPlants" id="TraesARI7B03G04223710.1">
    <property type="protein sequence ID" value="TraesARI7B03G04223710.1.CDS1"/>
    <property type="gene ID" value="TraesARI7B03G04223710"/>
</dbReference>
<dbReference type="EnsemblPlants" id="TraesARI7B03G04256830.1">
    <property type="protein sequence ID" value="TraesARI7B03G04256830.1.CDS1"/>
    <property type="gene ID" value="TraesARI7B03G04256830"/>
</dbReference>
<dbReference type="EnsemblPlants" id="TraesARI7B03G04256860.1">
    <property type="protein sequence ID" value="TraesARI7B03G04256860.1.CDS1"/>
    <property type="gene ID" value="TraesARI7B03G04256860"/>
</dbReference>
<dbReference type="EnsemblPlants" id="TraesCAD_scaffold_051791_01G000300.1">
    <property type="protein sequence ID" value="TraesCAD_scaffold_051791_01G000300.1"/>
    <property type="gene ID" value="TraesCAD_scaffold_051791_01G000300"/>
</dbReference>
<dbReference type="EnsemblPlants" id="TraesCLE_scaffold_070654_01G000300.1">
    <property type="protein sequence ID" value="TraesCLE_scaffold_070654_01G000300.1"/>
    <property type="gene ID" value="TraesCLE_scaffold_070654_01G000300"/>
</dbReference>
<dbReference type="EnsemblPlants" id="TraesCLE_scaffold_215537_01G000100.1">
    <property type="protein sequence ID" value="TraesCLE_scaffold_215537_01G000100.1"/>
    <property type="gene ID" value="TraesCLE_scaffold_215537_01G000100"/>
</dbReference>
<dbReference type="EnsemblPlants" id="TraesCS2D02G079400.1">
    <property type="protein sequence ID" value="TraesCS2D02G079400.1.cds1"/>
    <property type="gene ID" value="TraesCS2D02G079400"/>
</dbReference>
<dbReference type="EnsemblPlants" id="TraesCS2D03G0156300.1">
    <property type="protein sequence ID" value="TraesCS2D03G0156300.1.CDS1"/>
    <property type="gene ID" value="TraesCS2D03G0156300"/>
</dbReference>
<dbReference type="EnsemblPlants" id="TraesCS4B02G000100.1">
    <property type="protein sequence ID" value="TraesCS4B02G000100.1.cds1"/>
    <property type="gene ID" value="TraesCS4B02G000100"/>
</dbReference>
<dbReference type="EnsemblPlants" id="TraesCS4B03G0000100.1">
    <property type="protein sequence ID" value="TraesCS4B03G0000100.1.CDS1"/>
    <property type="gene ID" value="TraesCS4B03G0000100"/>
</dbReference>
<dbReference type="EnsemblPlants" id="TraesCS5B02G234800.1">
    <property type="protein sequence ID" value="TraesCS5B02G234800.1.cds1"/>
    <property type="gene ID" value="TraesCS5B02G234800"/>
</dbReference>
<dbReference type="EnsemblPlants" id="TraesCS5B03G0613800.1">
    <property type="protein sequence ID" value="TraesCS5B03G0613800.1.CDS1"/>
    <property type="gene ID" value="TraesCS5B03G0613800"/>
</dbReference>
<dbReference type="EnsemblPlants" id="TraesCSU02G245600.1">
    <property type="protein sequence ID" value="TraesCSU02G245600.1.cds1"/>
    <property type="gene ID" value="TraesCSU02G245600"/>
</dbReference>
<dbReference type="EnsemblPlants" id="TraesCSU03G0449500.1">
    <property type="protein sequence ID" value="TraesCSU03G0449500.1.CDS1"/>
    <property type="gene ID" value="TraesCSU03G0449500"/>
</dbReference>
<dbReference type="EnsemblPlants" id="TraesJAG2D03G01301740.1">
    <property type="protein sequence ID" value="TraesJAG2D03G01301740.1.CDS1"/>
    <property type="gene ID" value="TraesJAG2D03G01301740"/>
</dbReference>
<dbReference type="EnsemblPlants" id="TraesJAG5B03G02933560.1">
    <property type="protein sequence ID" value="TraesJAG5B03G02933560.1.CDS1"/>
    <property type="gene ID" value="TraesJAG5B03G02933560"/>
</dbReference>
<dbReference type="EnsemblPlants" id="TraesJAG5B03G02933600.1">
    <property type="protein sequence ID" value="TraesJAG5B03G02933600.1.CDS1"/>
    <property type="gene ID" value="TraesJAG5B03G02933600"/>
</dbReference>
<dbReference type="EnsemblPlants" id="TraesJAG7B03G04074740.1">
    <property type="protein sequence ID" value="TraesJAG7B03G04074740.1.CDS1"/>
    <property type="gene ID" value="TraesJAG7B03G04074740"/>
</dbReference>
<dbReference type="EnsemblPlants" id="TraesJUL2D03G01304930.1">
    <property type="protein sequence ID" value="TraesJUL2D03G01304930.1.CDS1"/>
    <property type="gene ID" value="TraesJUL2D03G01304930"/>
</dbReference>
<dbReference type="EnsemblPlants" id="TraesJUL2D03G01316720.1">
    <property type="protein sequence ID" value="TraesJUL2D03G01316720.1.CDS1"/>
    <property type="gene ID" value="TraesJUL2D03G01316720"/>
</dbReference>
<dbReference type="EnsemblPlants" id="TraesJUL5B03G02924450.1">
    <property type="protein sequence ID" value="TraesJUL5B03G02924450.1.CDS1"/>
    <property type="gene ID" value="TraesJUL5B03G02924450"/>
</dbReference>
<dbReference type="EnsemblPlants" id="TraesJUL7B03G04129960.1">
    <property type="protein sequence ID" value="TraesJUL7B03G04129960.1.CDS1"/>
    <property type="gene ID" value="TraesJUL7B03G04129960"/>
</dbReference>
<dbReference type="EnsemblPlants" id="TraesKAR2D01G0029920.1">
    <property type="protein sequence ID" value="cds.TraesKAR2D01G0029920.1"/>
    <property type="gene ID" value="TraesKAR2D01G0029920"/>
</dbReference>
<dbReference type="EnsemblPlants" id="TraesKAR2D01G0459100.1">
    <property type="protein sequence ID" value="cds.TraesKAR2D01G0459100.1"/>
    <property type="gene ID" value="TraesKAR2D01G0459100"/>
</dbReference>
<dbReference type="EnsemblPlants" id="TraesKAR2D01G0473470.1">
    <property type="protein sequence ID" value="cds.TraesKAR2D01G0473470.1"/>
    <property type="gene ID" value="TraesKAR2D01G0473470"/>
</dbReference>
<dbReference type="EnsemblPlants" id="TraesKAR4A01G0000290.1">
    <property type="protein sequence ID" value="cds.TraesKAR4A01G0000290.1"/>
    <property type="gene ID" value="TraesKAR4A01G0000290"/>
</dbReference>
<dbReference type="EnsemblPlants" id="TraesKAR6B01G0219090.1">
    <property type="protein sequence ID" value="cds.TraesKAR6B01G0219090.1"/>
    <property type="gene ID" value="TraesKAR6B01G0219090"/>
</dbReference>
<dbReference type="EnsemblPlants" id="TraesKAR6B01G0219990.1">
    <property type="protein sequence ID" value="cds.TraesKAR6B01G0219990.1"/>
    <property type="gene ID" value="TraesKAR6B01G0219990"/>
</dbReference>
<dbReference type="EnsemblPlants" id="TraesKARUn01G0025960.1">
    <property type="protein sequence ID" value="cds.TraesKARUn01G0025960.1"/>
    <property type="gene ID" value="TraesKARUn01G0025960"/>
</dbReference>
<dbReference type="EnsemblPlants" id="TraesKARUn01G0026680.1">
    <property type="protein sequence ID" value="cds.TraesKARUn01G0026680.1"/>
    <property type="gene ID" value="TraesKARUn01G0026680"/>
</dbReference>
<dbReference type="EnsemblPlants" id="TraesKARUn01G0027190.1">
    <property type="protein sequence ID" value="cds.TraesKARUn01G0027190.1"/>
    <property type="gene ID" value="TraesKARUn01G0027190"/>
</dbReference>
<dbReference type="EnsemblPlants" id="TraesKARUn01G0028680.1">
    <property type="protein sequence ID" value="cds.TraesKARUn01G0028680.1"/>
    <property type="gene ID" value="TraesKARUn01G0028680"/>
</dbReference>
<dbReference type="EnsemblPlants" id="TraesKARUn01G0029440.1">
    <property type="protein sequence ID" value="cds.TraesKARUn01G0029440.1"/>
    <property type="gene ID" value="TraesKARUn01G0029440"/>
</dbReference>
<dbReference type="EnsemblPlants" id="TraesKARUn01G0030130.1">
    <property type="protein sequence ID" value="cds.TraesKARUn01G0030130.1"/>
    <property type="gene ID" value="TraesKARUn01G0030130"/>
</dbReference>
<dbReference type="EnsemblPlants" id="TraesKARUn01G0030290.1">
    <property type="protein sequence ID" value="cds.TraesKARUn01G0030290.1"/>
    <property type="gene ID" value="TraesKARUn01G0030290"/>
</dbReference>
<dbReference type="EnsemblPlants" id="TraesKARUn01G0030560.1">
    <property type="protein sequence ID" value="cds.TraesKARUn01G0030560.1"/>
    <property type="gene ID" value="TraesKARUn01G0030560"/>
</dbReference>
<dbReference type="EnsemblPlants" id="TraesKARUn01G0030680.1">
    <property type="protein sequence ID" value="cds.TraesKARUn01G0030680.1"/>
    <property type="gene ID" value="TraesKARUn01G0030680"/>
</dbReference>
<dbReference type="EnsemblPlants" id="TraesKARUn01G0034810.1">
    <property type="protein sequence ID" value="cds.TraesKARUn01G0034810.1"/>
    <property type="gene ID" value="TraesKARUn01G0034810"/>
</dbReference>
<dbReference type="EnsemblPlants" id="TraesKARUn01G0060340.1">
    <property type="protein sequence ID" value="cds.TraesKARUn01G0060340.1"/>
    <property type="gene ID" value="TraesKARUn01G0060340"/>
</dbReference>
<dbReference type="EnsemblPlants" id="TraesKARUn01G0061380.1">
    <property type="protein sequence ID" value="cds.TraesKARUn01G0061380.1"/>
    <property type="gene ID" value="TraesKARUn01G0061380"/>
</dbReference>
<dbReference type="EnsemblPlants" id="TraesKARUn01G0061660.1">
    <property type="protein sequence ID" value="cds.TraesKARUn01G0061660.1"/>
    <property type="gene ID" value="TraesKARUn01G0061660"/>
</dbReference>
<dbReference type="EnsemblPlants" id="TraesKARUn01G0064670.1">
    <property type="protein sequence ID" value="cds.TraesKARUn01G0064670.1"/>
    <property type="gene ID" value="TraesKARUn01G0064670"/>
</dbReference>
<dbReference type="EnsemblPlants" id="TraesKARUn01G0067030.1">
    <property type="protein sequence ID" value="cds.TraesKARUn01G0067030.1"/>
    <property type="gene ID" value="TraesKARUn01G0067030"/>
</dbReference>
<dbReference type="EnsemblPlants" id="TraesKARUn01G0069950.1">
    <property type="protein sequence ID" value="cds.TraesKARUn01G0069950.1"/>
    <property type="gene ID" value="TraesKARUn01G0069950"/>
</dbReference>
<dbReference type="EnsemblPlants" id="TraesKARUn01G0070760.1">
    <property type="protein sequence ID" value="cds.TraesKARUn01G0070760.1"/>
    <property type="gene ID" value="TraesKARUn01G0070760"/>
</dbReference>
<dbReference type="EnsemblPlants" id="TraesKARUn01G0072400.1">
    <property type="protein sequence ID" value="cds.TraesKARUn01G0072400.1"/>
    <property type="gene ID" value="TraesKARUn01G0072400"/>
</dbReference>
<dbReference type="EnsemblPlants" id="TraesKARUn01G0073910.1">
    <property type="protein sequence ID" value="cds.TraesKARUn01G0073910.1"/>
    <property type="gene ID" value="TraesKARUn01G0073910"/>
</dbReference>
<dbReference type="EnsemblPlants" id="TraesKARUn01G0075020.1">
    <property type="protein sequence ID" value="cds.TraesKARUn01G0075020.1"/>
    <property type="gene ID" value="TraesKARUn01G0075020"/>
</dbReference>
<dbReference type="EnsemblPlants" id="TraesKARUn01G0076190.1">
    <property type="protein sequence ID" value="cds.TraesKARUn01G0076190.1"/>
    <property type="gene ID" value="TraesKARUn01G0076190"/>
</dbReference>
<dbReference type="EnsemblPlants" id="TraesKARUn01G0077260.1">
    <property type="protein sequence ID" value="cds.TraesKARUn01G0077260.1"/>
    <property type="gene ID" value="TraesKARUn01G0077260"/>
</dbReference>
<dbReference type="EnsemblPlants" id="TraesKARUn01G0077440.1">
    <property type="protein sequence ID" value="cds.TraesKARUn01G0077440.1"/>
    <property type="gene ID" value="TraesKARUn01G0077440"/>
</dbReference>
<dbReference type="EnsemblPlants" id="TraesKARUn01G0077800.1">
    <property type="protein sequence ID" value="cds.TraesKARUn01G0077800.1"/>
    <property type="gene ID" value="TraesKARUn01G0077800"/>
</dbReference>
<dbReference type="EnsemblPlants" id="TraesKARUn01G0078740.1">
    <property type="protein sequence ID" value="cds.TraesKARUn01G0078740.1"/>
    <property type="gene ID" value="TraesKARUn01G0078740"/>
</dbReference>
<dbReference type="EnsemblPlants" id="TraesKARUn01G0078790.1">
    <property type="protein sequence ID" value="cds.TraesKARUn01G0078790.1"/>
    <property type="gene ID" value="TraesKARUn01G0078790"/>
</dbReference>
<dbReference type="EnsemblPlants" id="TraesKARUn01G0080980.1">
    <property type="protein sequence ID" value="cds.TraesKARUn01G0080980.1"/>
    <property type="gene ID" value="TraesKARUn01G0080980"/>
</dbReference>
<dbReference type="EnsemblPlants" id="TraesKARUn01G0085640.1">
    <property type="protein sequence ID" value="cds.TraesKARUn01G0085640.1"/>
    <property type="gene ID" value="TraesKARUn01G0085640"/>
</dbReference>
<dbReference type="EnsemblPlants" id="TraesKARUn01G0087450.1">
    <property type="protein sequence ID" value="cds.TraesKARUn01G0087450.1"/>
    <property type="gene ID" value="TraesKARUn01G0087450"/>
</dbReference>
<dbReference type="EnsemblPlants" id="TraesKARUn01G0087770.1">
    <property type="protein sequence ID" value="cds.TraesKARUn01G0087770.1"/>
    <property type="gene ID" value="TraesKARUn01G0087770"/>
</dbReference>
<dbReference type="EnsemblPlants" id="TraesKARUn01G0088020.1">
    <property type="protein sequence ID" value="cds.TraesKARUn01G0088020.1"/>
    <property type="gene ID" value="TraesKARUn01G0088020"/>
</dbReference>
<dbReference type="EnsemblPlants" id="TraesKARUn01G0090490.1">
    <property type="protein sequence ID" value="cds.TraesKARUn01G0090490.1"/>
    <property type="gene ID" value="TraesKARUn01G0090490"/>
</dbReference>
<dbReference type="EnsemblPlants" id="TraesKARUn01G0092330.1">
    <property type="protein sequence ID" value="cds.TraesKARUn01G0092330.1"/>
    <property type="gene ID" value="TraesKARUn01G0092330"/>
</dbReference>
<dbReference type="EnsemblPlants" id="TraesKARUn01G0095410.1">
    <property type="protein sequence ID" value="cds.TraesKARUn01G0095410.1"/>
    <property type="gene ID" value="TraesKARUn01G0095410"/>
</dbReference>
<dbReference type="EnsemblPlants" id="TraesKARUn01G0097260.1">
    <property type="protein sequence ID" value="cds.TraesKARUn01G0097260.1"/>
    <property type="gene ID" value="TraesKARUn01G0097260"/>
</dbReference>
<dbReference type="EnsemblPlants" id="TraesKARUn01G0103660.1">
    <property type="protein sequence ID" value="cds.TraesKARUn01G0103660.1"/>
    <property type="gene ID" value="TraesKARUn01G0103660"/>
</dbReference>
<dbReference type="EnsemblPlants" id="TraesKARUn01G0104500.1">
    <property type="protein sequence ID" value="cds.TraesKARUn01G0104500.1"/>
    <property type="gene ID" value="TraesKARUn01G0104500"/>
</dbReference>
<dbReference type="EnsemblPlants" id="TraesKARUn01G0108510.1">
    <property type="protein sequence ID" value="cds.TraesKARUn01G0108510.1"/>
    <property type="gene ID" value="TraesKARUn01G0108510"/>
</dbReference>
<dbReference type="EnsemblPlants" id="TraesKARUn01G0108770.1">
    <property type="protein sequence ID" value="cds.TraesKARUn01G0108770.1"/>
    <property type="gene ID" value="TraesKARUn01G0108770"/>
</dbReference>
<dbReference type="EnsemblPlants" id="TraesKARUn01G0109670.1">
    <property type="protein sequence ID" value="cds.TraesKARUn01G0109670.1"/>
    <property type="gene ID" value="TraesKARUn01G0109670"/>
</dbReference>
<dbReference type="EnsemblPlants" id="TraesKARUn01G0110920.1">
    <property type="protein sequence ID" value="cds.TraesKARUn01G0110920.1"/>
    <property type="gene ID" value="TraesKARUn01G0110920"/>
</dbReference>
<dbReference type="EnsemblPlants" id="TraesKARUn01G0113390.1">
    <property type="protein sequence ID" value="cds.TraesKARUn01G0113390.1"/>
    <property type="gene ID" value="TraesKARUn01G0113390"/>
</dbReference>
<dbReference type="EnsemblPlants" id="TraesKARUn01G0114730.1">
    <property type="protein sequence ID" value="cds.TraesKARUn01G0114730.1"/>
    <property type="gene ID" value="TraesKARUn01G0114730"/>
</dbReference>
<dbReference type="EnsemblPlants" id="TraesKARUn01G0120020.1">
    <property type="protein sequence ID" value="cds.TraesKARUn01G0120020.1"/>
    <property type="gene ID" value="TraesKARUn01G0120020"/>
</dbReference>
<dbReference type="EnsemblPlants" id="TraesKARUn01G0122510.1">
    <property type="protein sequence ID" value="cds.TraesKARUn01G0122510.1"/>
    <property type="gene ID" value="TraesKARUn01G0122510"/>
</dbReference>
<dbReference type="EnsemblPlants" id="TraesKARUn01G0122540.1">
    <property type="protein sequence ID" value="cds.TraesKARUn01G0122540.1"/>
    <property type="gene ID" value="TraesKARUn01G0122540"/>
</dbReference>
<dbReference type="EnsemblPlants" id="TraesKARUn01G0122750.1">
    <property type="protein sequence ID" value="cds.TraesKARUn01G0122750.1"/>
    <property type="gene ID" value="TraesKARUn01G0122750"/>
</dbReference>
<dbReference type="EnsemblPlants" id="TraesKARUn01G0122920.1">
    <property type="protein sequence ID" value="cds.TraesKARUn01G0122920.1"/>
    <property type="gene ID" value="TraesKARUn01G0122920"/>
</dbReference>
<dbReference type="EnsemblPlants" id="TraesKARUn01G0130090.1">
    <property type="protein sequence ID" value="cds.TraesKARUn01G0130090.1"/>
    <property type="gene ID" value="TraesKARUn01G0130090"/>
</dbReference>
<dbReference type="EnsemblPlants" id="TraesKARUn01G0130360.1">
    <property type="protein sequence ID" value="cds.TraesKARUn01G0130360.1"/>
    <property type="gene ID" value="TraesKARUn01G0130360"/>
</dbReference>
<dbReference type="EnsemblPlants" id="TraesKARUn01G0133510.1">
    <property type="protein sequence ID" value="cds.TraesKARUn01G0133510.1"/>
    <property type="gene ID" value="TraesKARUn01G0133510"/>
</dbReference>
<dbReference type="EnsemblPlants" id="TraesKARUn01G0134710.1">
    <property type="protein sequence ID" value="cds.TraesKARUn01G0134710.1"/>
    <property type="gene ID" value="TraesKARUn01G0134710"/>
</dbReference>
<dbReference type="EnsemblPlants" id="TraesKARUn01G0134910.1">
    <property type="protein sequence ID" value="cds.TraesKARUn01G0134910.1"/>
    <property type="gene ID" value="TraesKARUn01G0134910"/>
</dbReference>
<dbReference type="EnsemblPlants" id="TraesKARUn01G0141020.1">
    <property type="protein sequence ID" value="cds.TraesKARUn01G0141020.1"/>
    <property type="gene ID" value="TraesKARUn01G0141020"/>
</dbReference>
<dbReference type="EnsemblPlants" id="TraesKARUn01G0142350.1">
    <property type="protein sequence ID" value="cds.TraesKARUn01G0142350.1"/>
    <property type="gene ID" value="TraesKARUn01G0142350"/>
</dbReference>
<dbReference type="EnsemblPlants" id="TraesKARUn01G0142560.1">
    <property type="protein sequence ID" value="cds.TraesKARUn01G0142560.1"/>
    <property type="gene ID" value="TraesKARUn01G0142560"/>
</dbReference>
<dbReference type="EnsemblPlants" id="TraesKARUn01G0143010.1">
    <property type="protein sequence ID" value="cds.TraesKARUn01G0143010.1"/>
    <property type="gene ID" value="TraesKARUn01G0143010"/>
</dbReference>
<dbReference type="EnsemblPlants" id="TraesKARUn01G0143780.1">
    <property type="protein sequence ID" value="cds.TraesKARUn01G0143780.1"/>
    <property type="gene ID" value="TraesKARUn01G0143780"/>
</dbReference>
<dbReference type="EnsemblPlants" id="TraesKARUn01G0145520.1">
    <property type="protein sequence ID" value="cds.TraesKARUn01G0145520.1"/>
    <property type="gene ID" value="TraesKARUn01G0145520"/>
</dbReference>
<dbReference type="EnsemblPlants" id="TraesKARUn01G0148880.1">
    <property type="protein sequence ID" value="cds.TraesKARUn01G0148880.1"/>
    <property type="gene ID" value="TraesKARUn01G0148880"/>
</dbReference>
<dbReference type="EnsemblPlants" id="TraesKARUn01G0149090.1">
    <property type="protein sequence ID" value="cds.TraesKARUn01G0149090.1"/>
    <property type="gene ID" value="TraesKARUn01G0149090"/>
</dbReference>
<dbReference type="EnsemblPlants" id="TraesKARUn01G0149330.1">
    <property type="protein sequence ID" value="cds.TraesKARUn01G0149330.1"/>
    <property type="gene ID" value="TraesKARUn01G0149330"/>
</dbReference>
<dbReference type="EnsemblPlants" id="TraesKARUn01G0149990.1">
    <property type="protein sequence ID" value="cds.TraesKARUn01G0149990.1"/>
    <property type="gene ID" value="TraesKARUn01G0149990"/>
</dbReference>
<dbReference type="EnsemblPlants" id="TraesKARUn01G0150330.1">
    <property type="protein sequence ID" value="cds.TraesKARUn01G0150330.1"/>
    <property type="gene ID" value="TraesKARUn01G0150330"/>
</dbReference>
<dbReference type="EnsemblPlants" id="TraesKARUn01G0155720.1">
    <property type="protein sequence ID" value="cds.TraesKARUn01G0155720.1"/>
    <property type="gene ID" value="TraesKARUn01G0155720"/>
</dbReference>
<dbReference type="EnsemblPlants" id="TraesKARUn01G0157420.1">
    <property type="protein sequence ID" value="cds.TraesKARUn01G0157420.1"/>
    <property type="gene ID" value="TraesKARUn01G0157420"/>
</dbReference>
<dbReference type="EnsemblPlants" id="TraesKARUn01G0161470.1">
    <property type="protein sequence ID" value="cds.TraesKARUn01G0161470.1"/>
    <property type="gene ID" value="TraesKARUn01G0161470"/>
</dbReference>
<dbReference type="EnsemblPlants" id="TraesKARUn01G0161670.1">
    <property type="protein sequence ID" value="cds.TraesKARUn01G0161670.1"/>
    <property type="gene ID" value="TraesKARUn01G0161670"/>
</dbReference>
<dbReference type="EnsemblPlants" id="TraesKARUn01G0161960.1">
    <property type="protein sequence ID" value="cds.TraesKARUn01G0161960.1"/>
    <property type="gene ID" value="TraesKARUn01G0161960"/>
</dbReference>
<dbReference type="EnsemblPlants" id="TraesKARUn01G0167030.1">
    <property type="protein sequence ID" value="cds.TraesKARUn01G0167030.1"/>
    <property type="gene ID" value="TraesKARUn01G0167030"/>
</dbReference>
<dbReference type="EnsemblPlants" id="TraesKARUn01G0167290.1">
    <property type="protein sequence ID" value="cds.TraesKARUn01G0167290.1"/>
    <property type="gene ID" value="TraesKARUn01G0167290"/>
</dbReference>
<dbReference type="EnsemblPlants" id="TraesKARUn01G0172080.1">
    <property type="protein sequence ID" value="cds.TraesKARUn01G0172080.1"/>
    <property type="gene ID" value="TraesKARUn01G0172080"/>
</dbReference>
<dbReference type="EnsemblPlants" id="TraesKARUn01G0172480.1">
    <property type="protein sequence ID" value="cds.TraesKARUn01G0172480.1"/>
    <property type="gene ID" value="TraesKARUn01G0172480"/>
</dbReference>
<dbReference type="EnsemblPlants" id="TraesKARUn01G0172580.1">
    <property type="protein sequence ID" value="cds.TraesKARUn01G0172580.1"/>
    <property type="gene ID" value="TraesKARUn01G0172580"/>
</dbReference>
<dbReference type="EnsemblPlants" id="TraesKARUn01G0173240.1">
    <property type="protein sequence ID" value="cds.TraesKARUn01G0173240.1"/>
    <property type="gene ID" value="TraesKARUn01G0173240"/>
</dbReference>
<dbReference type="EnsemblPlants" id="TraesKARUn01G0173550.1">
    <property type="protein sequence ID" value="cds.TraesKARUn01G0173550.1"/>
    <property type="gene ID" value="TraesKARUn01G0173550"/>
</dbReference>
<dbReference type="EnsemblPlants" id="TraesKARUn01G0173820.1">
    <property type="protein sequence ID" value="cds.TraesKARUn01G0173820.1"/>
    <property type="gene ID" value="TraesKARUn01G0173820"/>
</dbReference>
<dbReference type="EnsemblPlants" id="TraesKARUn01G0173990.1">
    <property type="protein sequence ID" value="cds.TraesKARUn01G0173990.1"/>
    <property type="gene ID" value="TraesKARUn01G0173990"/>
</dbReference>
<dbReference type="EnsemblPlants" id="TraesKARUn01G0174100.1">
    <property type="protein sequence ID" value="cds.TraesKARUn01G0174100.1"/>
    <property type="gene ID" value="TraesKARUn01G0174100"/>
</dbReference>
<dbReference type="EnsemblPlants" id="TraesKARUn01G0174850.1">
    <property type="protein sequence ID" value="cds.TraesKARUn01G0174850.1"/>
    <property type="gene ID" value="TraesKARUn01G0174850"/>
</dbReference>
<dbReference type="EnsemblPlants" id="TraesKARUn01G0176350.1">
    <property type="protein sequence ID" value="cds.TraesKARUn01G0176350.1"/>
    <property type="gene ID" value="TraesKARUn01G0176350"/>
</dbReference>
<dbReference type="EnsemblPlants" id="TraesKARUn01G0177410.1">
    <property type="protein sequence ID" value="cds.TraesKARUn01G0177410.1"/>
    <property type="gene ID" value="TraesKARUn01G0177410"/>
</dbReference>
<dbReference type="EnsemblPlants" id="TraesKARUn01G0179550.1">
    <property type="protein sequence ID" value="cds.TraesKARUn01G0179550.1"/>
    <property type="gene ID" value="TraesKARUn01G0179550"/>
</dbReference>
<dbReference type="EnsemblPlants" id="TraesKARUn01G0179680.1">
    <property type="protein sequence ID" value="cds.TraesKARUn01G0179680.1"/>
    <property type="gene ID" value="TraesKARUn01G0179680"/>
</dbReference>
<dbReference type="EnsemblPlants" id="TraesKARUn01G0180480.1">
    <property type="protein sequence ID" value="cds.TraesKARUn01G0180480.1"/>
    <property type="gene ID" value="TraesKARUn01G0180480"/>
</dbReference>
<dbReference type="EnsemblPlants" id="TraesKARUn01G0182010.1">
    <property type="protein sequence ID" value="cds.TraesKARUn01G0182010.1"/>
    <property type="gene ID" value="TraesKARUn01G0182010"/>
</dbReference>
<dbReference type="EnsemblPlants" id="TraesKARUn01G0186300.1">
    <property type="protein sequence ID" value="cds.TraesKARUn01G0186300.1"/>
    <property type="gene ID" value="TraesKARUn01G0186300"/>
</dbReference>
<dbReference type="EnsemblPlants" id="TraesKARUn01G0186930.1">
    <property type="protein sequence ID" value="cds.TraesKARUn01G0186930.1"/>
    <property type="gene ID" value="TraesKARUn01G0186930"/>
</dbReference>
<dbReference type="EnsemblPlants" id="TraesKARUn01G0191660.1">
    <property type="protein sequence ID" value="cds.TraesKARUn01G0191660.1"/>
    <property type="gene ID" value="TraesKARUn01G0191660"/>
</dbReference>
<dbReference type="EnsemblPlants" id="TraesKARUn01G0192110.1">
    <property type="protein sequence ID" value="cds.TraesKARUn01G0192110.1"/>
    <property type="gene ID" value="TraesKARUn01G0192110"/>
</dbReference>
<dbReference type="EnsemblPlants" id="TraesLAC2D03G01055010.1">
    <property type="protein sequence ID" value="TraesLAC2D03G01055010.1.CDS1"/>
    <property type="gene ID" value="TraesLAC2D03G01055010"/>
</dbReference>
<dbReference type="EnsemblPlants" id="TraesLAC2D03G01245070.1">
    <property type="protein sequence ID" value="TraesLAC2D03G01245070.1.CDS1"/>
    <property type="gene ID" value="TraesLAC2D03G01245070"/>
</dbReference>
<dbReference type="EnsemblPlants" id="TraesLDM2D03G01293930.1">
    <property type="protein sequence ID" value="TraesLDM2D03G01293930.1.CDS1"/>
    <property type="gene ID" value="TraesLDM2D03G01293930"/>
</dbReference>
<dbReference type="EnsemblPlants" id="TraesLDM2D03G01305470.1">
    <property type="protein sequence ID" value="TraesLDM2D03G01305470.1.CDS1"/>
    <property type="gene ID" value="TraesLDM2D03G01305470"/>
</dbReference>
<dbReference type="EnsemblPlants" id="TraesLDM7B03G04095560.1">
    <property type="protein sequence ID" value="TraesLDM7B03G04095560.1.CDS1"/>
    <property type="gene ID" value="TraesLDM7B03G04095560"/>
</dbReference>
<dbReference type="EnsemblPlants" id="TraesLDM7B03G04275440.1">
    <property type="protein sequence ID" value="TraesLDM7B03G04275440.1.CDS1"/>
    <property type="gene ID" value="TraesLDM7B03G04275440"/>
</dbReference>
<dbReference type="EnsemblPlants" id="TraesMAC2D03G01101750.1">
    <property type="protein sequence ID" value="TraesMAC2D03G01101750.1.CDS1"/>
    <property type="gene ID" value="TraesMAC2D03G01101750"/>
</dbReference>
<dbReference type="EnsemblPlants" id="TraesMAC2D03G01291400.1">
    <property type="protein sequence ID" value="TraesMAC2D03G01291400.1.CDS1"/>
    <property type="gene ID" value="TraesMAC2D03G01291400"/>
</dbReference>
<dbReference type="EnsemblPlants" id="TraesMAC2D03G01301970.1">
    <property type="protein sequence ID" value="TraesMAC2D03G01301970.1.CDS1"/>
    <property type="gene ID" value="TraesMAC2D03G01301970"/>
</dbReference>
<dbReference type="EnsemblPlants" id="TraesNOR2D03G01119200.1">
    <property type="protein sequence ID" value="TraesNOR2D03G01119200.1.CDS1"/>
    <property type="gene ID" value="TraesNOR2D03G01119200"/>
</dbReference>
<dbReference type="EnsemblPlants" id="TraesNOR2D03G01309700.1">
    <property type="protein sequence ID" value="TraesNOR2D03G01309700.1.CDS1"/>
    <property type="gene ID" value="TraesNOR2D03G01309700"/>
</dbReference>
<dbReference type="EnsemblPlants" id="TraesNOR2D03G01318410.1">
    <property type="protein sequence ID" value="TraesNOR2D03G01318410.1.CDS1"/>
    <property type="gene ID" value="TraesNOR2D03G01318410"/>
</dbReference>
<dbReference type="EnsemblPlants" id="TraesPARA_EIv1.0_0642540.1">
    <property type="protein sequence ID" value="TraesPARA_EIv1.0_0642540.1.CDS1"/>
    <property type="gene ID" value="TraesPARA_EIv1.0_0642540"/>
</dbReference>
<dbReference type="EnsemblPlants" id="TraesRN1A0100595400.1">
    <property type="protein sequence ID" value="TraesRN1A0100595400.1"/>
    <property type="gene ID" value="TraesRN1A0100595400"/>
</dbReference>
<dbReference type="EnsemblPlants" id="TraesRN2D0100173700.1">
    <property type="protein sequence ID" value="TraesRN2D0100173700.1"/>
    <property type="gene ID" value="TraesRN2D0100173700"/>
</dbReference>
<dbReference type="EnsemblPlants" id="TraesRN3A0101018500.1">
    <property type="protein sequence ID" value="TraesRN3A0101018500.1"/>
    <property type="gene ID" value="TraesRN3A0101018500"/>
</dbReference>
<dbReference type="EnsemblPlants" id="TraesRN5B0100619400.1">
    <property type="protein sequence ID" value="TraesRN5B0100619400.1"/>
    <property type="gene ID" value="TraesRN5B0100619400"/>
</dbReference>
<dbReference type="EnsemblPlants" id="TraesRN7D0100597000.1">
    <property type="protein sequence ID" value="TraesRN7D0100597000.1"/>
    <property type="gene ID" value="TraesRN7D0100597000"/>
</dbReference>
<dbReference type="EnsemblPlants" id="TraesRN7D0100597100.1">
    <property type="protein sequence ID" value="TraesRN7D0100597100.1"/>
    <property type="gene ID" value="TraesRN7D0100597100"/>
</dbReference>
<dbReference type="EnsemblPlants" id="TraesROB_scaffold_056383_01G000300.1">
    <property type="protein sequence ID" value="TraesROB_scaffold_056383_01G000300.1"/>
    <property type="gene ID" value="TraesROB_scaffold_056383_01G000300"/>
</dbReference>
<dbReference type="EnsemblPlants" id="TraesSTA2D03G01281940.1">
    <property type="protein sequence ID" value="TraesSTA2D03G01281940.1.CDS1"/>
    <property type="gene ID" value="TraesSTA2D03G01281940"/>
</dbReference>
<dbReference type="EnsemblPlants" id="TraesSTA2D03G01294580.1">
    <property type="protein sequence ID" value="TraesSTA2D03G01294580.1.CDS1"/>
    <property type="gene ID" value="TraesSTA2D03G01294580"/>
</dbReference>
<dbReference type="EnsemblPlants" id="TraesSYM2D03G01117320.1">
    <property type="protein sequence ID" value="TraesSYM2D03G01117320.1.CDS1"/>
    <property type="gene ID" value="TraesSYM2D03G01117320"/>
</dbReference>
<dbReference type="EnsemblPlants" id="TraesSYM2D03G01323500.1">
    <property type="protein sequence ID" value="TraesSYM2D03G01323500.1.CDS1"/>
    <property type="gene ID" value="TraesSYM2D03G01323500"/>
</dbReference>
<dbReference type="EnsemblPlants" id="TraesSYM5B03G02909970.1">
    <property type="protein sequence ID" value="TraesSYM5B03G02909970.1.CDS1"/>
    <property type="gene ID" value="TraesSYM5B03G02909970"/>
</dbReference>
<dbReference type="EnsemblPlants" id="TraesSYM7B03G04083880.1">
    <property type="protein sequence ID" value="TraesSYM7B03G04083880.1.CDS1"/>
    <property type="gene ID" value="TraesSYM7B03G04083880"/>
</dbReference>
<dbReference type="EnsemblPlants" id="TraesSYM7B03G04117470.1">
    <property type="protein sequence ID" value="TraesSYM7B03G04117470.1.CDS1"/>
    <property type="gene ID" value="TraesSYM7B03G04117470"/>
</dbReference>
<dbReference type="EnsemblPlants" id="TraesWEE_scaffold_192274_01G000300.1">
    <property type="protein sequence ID" value="TraesWEE_scaffold_192274_01G000300.1"/>
    <property type="gene ID" value="TraesWEE_scaffold_192274_01G000300"/>
</dbReference>
<dbReference type="GeneID" id="803141"/>
<dbReference type="Gramene" id="TraesARI2D03G01119560.1">
    <property type="protein sequence ID" value="TraesARI2D03G01119560.1.CDS1"/>
    <property type="gene ID" value="TraesARI2D03G01119560"/>
</dbReference>
<dbReference type="Gramene" id="TraesARI2D03G01318960.1">
    <property type="protein sequence ID" value="TraesARI2D03G01318960.1.CDS1"/>
    <property type="gene ID" value="TraesARI2D03G01318960"/>
</dbReference>
<dbReference type="Gramene" id="TraesARI2D03G01325210.1">
    <property type="protein sequence ID" value="TraesARI2D03G01325210.1.CDS1"/>
    <property type="gene ID" value="TraesARI2D03G01325210"/>
</dbReference>
<dbReference type="Gramene" id="TraesARI5B03G02923520.1">
    <property type="protein sequence ID" value="TraesARI5B03G02923520.1.CDS1"/>
    <property type="gene ID" value="TraesARI5B03G02923520"/>
</dbReference>
<dbReference type="Gramene" id="TraesARI7B03G04223710.1">
    <property type="protein sequence ID" value="TraesARI7B03G04223710.1.CDS1"/>
    <property type="gene ID" value="TraesARI7B03G04223710"/>
</dbReference>
<dbReference type="Gramene" id="TraesARI7B03G04256830.1">
    <property type="protein sequence ID" value="TraesARI7B03G04256830.1.CDS1"/>
    <property type="gene ID" value="TraesARI7B03G04256830"/>
</dbReference>
<dbReference type="Gramene" id="TraesARI7B03G04256860.1">
    <property type="protein sequence ID" value="TraesARI7B03G04256860.1.CDS1"/>
    <property type="gene ID" value="TraesARI7B03G04256860"/>
</dbReference>
<dbReference type="Gramene" id="TraesCAD_scaffold_051791_01G000300.1">
    <property type="protein sequence ID" value="TraesCAD_scaffold_051791_01G000300.1"/>
    <property type="gene ID" value="TraesCAD_scaffold_051791_01G000300"/>
</dbReference>
<dbReference type="Gramene" id="TraesCLE_scaffold_070654_01G000300.1">
    <property type="protein sequence ID" value="TraesCLE_scaffold_070654_01G000300.1"/>
    <property type="gene ID" value="TraesCLE_scaffold_070654_01G000300"/>
</dbReference>
<dbReference type="Gramene" id="TraesCLE_scaffold_215537_01G000100.1">
    <property type="protein sequence ID" value="TraesCLE_scaffold_215537_01G000100.1"/>
    <property type="gene ID" value="TraesCLE_scaffold_215537_01G000100"/>
</dbReference>
<dbReference type="Gramene" id="TraesCS2D02G079400.1">
    <property type="protein sequence ID" value="TraesCS2D02G079400.1.cds1"/>
    <property type="gene ID" value="TraesCS2D02G079400"/>
</dbReference>
<dbReference type="Gramene" id="TraesCS2D03G0156300.1">
    <property type="protein sequence ID" value="TraesCS2D03G0156300.1.CDS1"/>
    <property type="gene ID" value="TraesCS2D03G0156300"/>
</dbReference>
<dbReference type="Gramene" id="TraesCS4B02G000100.1">
    <property type="protein sequence ID" value="TraesCS4B02G000100.1.cds1"/>
    <property type="gene ID" value="TraesCS4B02G000100"/>
</dbReference>
<dbReference type="Gramene" id="TraesCS4B03G0000100.1">
    <property type="protein sequence ID" value="TraesCS4B03G0000100.1.CDS1"/>
    <property type="gene ID" value="TraesCS4B03G0000100"/>
</dbReference>
<dbReference type="Gramene" id="TraesCS5B02G234800.1">
    <property type="protein sequence ID" value="TraesCS5B02G234800.1.cds1"/>
    <property type="gene ID" value="TraesCS5B02G234800"/>
</dbReference>
<dbReference type="Gramene" id="TraesCS5B03G0613800.1">
    <property type="protein sequence ID" value="TraesCS5B03G0613800.1.CDS1"/>
    <property type="gene ID" value="TraesCS5B03G0613800"/>
</dbReference>
<dbReference type="Gramene" id="TraesCSU02G245600.1">
    <property type="protein sequence ID" value="TraesCSU02G245600.1.cds1"/>
    <property type="gene ID" value="TraesCSU02G245600"/>
</dbReference>
<dbReference type="Gramene" id="TraesCSU03G0449500.1">
    <property type="protein sequence ID" value="TraesCSU03G0449500.1.CDS1"/>
    <property type="gene ID" value="TraesCSU03G0449500"/>
</dbReference>
<dbReference type="Gramene" id="TraesJAG2D03G01301740.1">
    <property type="protein sequence ID" value="TraesJAG2D03G01301740.1.CDS1"/>
    <property type="gene ID" value="TraesJAG2D03G01301740"/>
</dbReference>
<dbReference type="Gramene" id="TraesJAG5B03G02933560.1">
    <property type="protein sequence ID" value="TraesJAG5B03G02933560.1.CDS1"/>
    <property type="gene ID" value="TraesJAG5B03G02933560"/>
</dbReference>
<dbReference type="Gramene" id="TraesJAG5B03G02933600.1">
    <property type="protein sequence ID" value="TraesJAG5B03G02933600.1.CDS1"/>
    <property type="gene ID" value="TraesJAG5B03G02933600"/>
</dbReference>
<dbReference type="Gramene" id="TraesJAG7B03G04074740.1">
    <property type="protein sequence ID" value="TraesJAG7B03G04074740.1.CDS1"/>
    <property type="gene ID" value="TraesJAG7B03G04074740"/>
</dbReference>
<dbReference type="Gramene" id="TraesJUL2D03G01304930.1">
    <property type="protein sequence ID" value="TraesJUL2D03G01304930.1.CDS1"/>
    <property type="gene ID" value="TraesJUL2D03G01304930"/>
</dbReference>
<dbReference type="Gramene" id="TraesJUL2D03G01316720.1">
    <property type="protein sequence ID" value="TraesJUL2D03G01316720.1.CDS1"/>
    <property type="gene ID" value="TraesJUL2D03G01316720"/>
</dbReference>
<dbReference type="Gramene" id="TraesJUL5B03G02924450.1">
    <property type="protein sequence ID" value="TraesJUL5B03G02924450.1.CDS1"/>
    <property type="gene ID" value="TraesJUL5B03G02924450"/>
</dbReference>
<dbReference type="Gramene" id="TraesJUL7B03G04129960.1">
    <property type="protein sequence ID" value="TraesJUL7B03G04129960.1.CDS1"/>
    <property type="gene ID" value="TraesJUL7B03G04129960"/>
</dbReference>
<dbReference type="Gramene" id="TraesKAR2D01G0029920.1">
    <property type="protein sequence ID" value="cds.TraesKAR2D01G0029920.1"/>
    <property type="gene ID" value="TraesKAR2D01G0029920"/>
</dbReference>
<dbReference type="Gramene" id="TraesKAR2D01G0459100.1">
    <property type="protein sequence ID" value="cds.TraesKAR2D01G0459100.1"/>
    <property type="gene ID" value="TraesKAR2D01G0459100"/>
</dbReference>
<dbReference type="Gramene" id="TraesKAR2D01G0473470.1">
    <property type="protein sequence ID" value="cds.TraesKAR2D01G0473470.1"/>
    <property type="gene ID" value="TraesKAR2D01G0473470"/>
</dbReference>
<dbReference type="Gramene" id="TraesKAR4A01G0000290.1">
    <property type="protein sequence ID" value="cds.TraesKAR4A01G0000290.1"/>
    <property type="gene ID" value="TraesKAR4A01G0000290"/>
</dbReference>
<dbReference type="Gramene" id="TraesKAR6B01G0219090.1">
    <property type="protein sequence ID" value="cds.TraesKAR6B01G0219090.1"/>
    <property type="gene ID" value="TraesKAR6B01G0219090"/>
</dbReference>
<dbReference type="Gramene" id="TraesKAR6B01G0219990.1">
    <property type="protein sequence ID" value="cds.TraesKAR6B01G0219990.1"/>
    <property type="gene ID" value="TraesKAR6B01G0219990"/>
</dbReference>
<dbReference type="Gramene" id="TraesKARUn01G0025960.1">
    <property type="protein sequence ID" value="cds.TraesKARUn01G0025960.1"/>
    <property type="gene ID" value="TraesKARUn01G0025960"/>
</dbReference>
<dbReference type="Gramene" id="TraesKARUn01G0026680.1">
    <property type="protein sequence ID" value="cds.TraesKARUn01G0026680.1"/>
    <property type="gene ID" value="TraesKARUn01G0026680"/>
</dbReference>
<dbReference type="Gramene" id="TraesKARUn01G0027190.1">
    <property type="protein sequence ID" value="cds.TraesKARUn01G0027190.1"/>
    <property type="gene ID" value="TraesKARUn01G0027190"/>
</dbReference>
<dbReference type="Gramene" id="TraesKARUn01G0028680.1">
    <property type="protein sequence ID" value="cds.TraesKARUn01G0028680.1"/>
    <property type="gene ID" value="TraesKARUn01G0028680"/>
</dbReference>
<dbReference type="Gramene" id="TraesKARUn01G0029440.1">
    <property type="protein sequence ID" value="cds.TraesKARUn01G0029440.1"/>
    <property type="gene ID" value="TraesKARUn01G0029440"/>
</dbReference>
<dbReference type="Gramene" id="TraesKARUn01G0030130.1">
    <property type="protein sequence ID" value="cds.TraesKARUn01G0030130.1"/>
    <property type="gene ID" value="TraesKARUn01G0030130"/>
</dbReference>
<dbReference type="Gramene" id="TraesKARUn01G0030290.1">
    <property type="protein sequence ID" value="cds.TraesKARUn01G0030290.1"/>
    <property type="gene ID" value="TraesKARUn01G0030290"/>
</dbReference>
<dbReference type="Gramene" id="TraesKARUn01G0030560.1">
    <property type="protein sequence ID" value="cds.TraesKARUn01G0030560.1"/>
    <property type="gene ID" value="TraesKARUn01G0030560"/>
</dbReference>
<dbReference type="Gramene" id="TraesKARUn01G0030680.1">
    <property type="protein sequence ID" value="cds.TraesKARUn01G0030680.1"/>
    <property type="gene ID" value="TraesKARUn01G0030680"/>
</dbReference>
<dbReference type="Gramene" id="TraesKARUn01G0034810.1">
    <property type="protein sequence ID" value="cds.TraesKARUn01G0034810.1"/>
    <property type="gene ID" value="TraesKARUn01G0034810"/>
</dbReference>
<dbReference type="Gramene" id="TraesKARUn01G0060340.1">
    <property type="protein sequence ID" value="cds.TraesKARUn01G0060340.1"/>
    <property type="gene ID" value="TraesKARUn01G0060340"/>
</dbReference>
<dbReference type="Gramene" id="TraesKARUn01G0061380.1">
    <property type="protein sequence ID" value="cds.TraesKARUn01G0061380.1"/>
    <property type="gene ID" value="TraesKARUn01G0061380"/>
</dbReference>
<dbReference type="Gramene" id="TraesKARUn01G0061660.1">
    <property type="protein sequence ID" value="cds.TraesKARUn01G0061660.1"/>
    <property type="gene ID" value="TraesKARUn01G0061660"/>
</dbReference>
<dbReference type="Gramene" id="TraesKARUn01G0064670.1">
    <property type="protein sequence ID" value="cds.TraesKARUn01G0064670.1"/>
    <property type="gene ID" value="TraesKARUn01G0064670"/>
</dbReference>
<dbReference type="Gramene" id="TraesKARUn01G0067030.1">
    <property type="protein sequence ID" value="cds.TraesKARUn01G0067030.1"/>
    <property type="gene ID" value="TraesKARUn01G0067030"/>
</dbReference>
<dbReference type="Gramene" id="TraesKARUn01G0069950.1">
    <property type="protein sequence ID" value="cds.TraesKARUn01G0069950.1"/>
    <property type="gene ID" value="TraesKARUn01G0069950"/>
</dbReference>
<dbReference type="Gramene" id="TraesKARUn01G0070760.1">
    <property type="protein sequence ID" value="cds.TraesKARUn01G0070760.1"/>
    <property type="gene ID" value="TraesKARUn01G0070760"/>
</dbReference>
<dbReference type="Gramene" id="TraesKARUn01G0072400.1">
    <property type="protein sequence ID" value="cds.TraesKARUn01G0072400.1"/>
    <property type="gene ID" value="TraesKARUn01G0072400"/>
</dbReference>
<dbReference type="Gramene" id="TraesKARUn01G0073910.1">
    <property type="protein sequence ID" value="cds.TraesKARUn01G0073910.1"/>
    <property type="gene ID" value="TraesKARUn01G0073910"/>
</dbReference>
<dbReference type="Gramene" id="TraesKARUn01G0075020.1">
    <property type="protein sequence ID" value="cds.TraesKARUn01G0075020.1"/>
    <property type="gene ID" value="TraesKARUn01G0075020"/>
</dbReference>
<dbReference type="Gramene" id="TraesKARUn01G0076190.1">
    <property type="protein sequence ID" value="cds.TraesKARUn01G0076190.1"/>
    <property type="gene ID" value="TraesKARUn01G0076190"/>
</dbReference>
<dbReference type="Gramene" id="TraesKARUn01G0077260.1">
    <property type="protein sequence ID" value="cds.TraesKARUn01G0077260.1"/>
    <property type="gene ID" value="TraesKARUn01G0077260"/>
</dbReference>
<dbReference type="Gramene" id="TraesKARUn01G0077440.1">
    <property type="protein sequence ID" value="cds.TraesKARUn01G0077440.1"/>
    <property type="gene ID" value="TraesKARUn01G0077440"/>
</dbReference>
<dbReference type="Gramene" id="TraesKARUn01G0077800.1">
    <property type="protein sequence ID" value="cds.TraesKARUn01G0077800.1"/>
    <property type="gene ID" value="TraesKARUn01G0077800"/>
</dbReference>
<dbReference type="Gramene" id="TraesKARUn01G0078740.1">
    <property type="protein sequence ID" value="cds.TraesKARUn01G0078740.1"/>
    <property type="gene ID" value="TraesKARUn01G0078740"/>
</dbReference>
<dbReference type="Gramene" id="TraesKARUn01G0078790.1">
    <property type="protein sequence ID" value="cds.TraesKARUn01G0078790.1"/>
    <property type="gene ID" value="TraesKARUn01G0078790"/>
</dbReference>
<dbReference type="Gramene" id="TraesKARUn01G0080980.1">
    <property type="protein sequence ID" value="cds.TraesKARUn01G0080980.1"/>
    <property type="gene ID" value="TraesKARUn01G0080980"/>
</dbReference>
<dbReference type="Gramene" id="TraesKARUn01G0085640.1">
    <property type="protein sequence ID" value="cds.TraesKARUn01G0085640.1"/>
    <property type="gene ID" value="TraesKARUn01G0085640"/>
</dbReference>
<dbReference type="Gramene" id="TraesKARUn01G0087450.1">
    <property type="protein sequence ID" value="cds.TraesKARUn01G0087450.1"/>
    <property type="gene ID" value="TraesKARUn01G0087450"/>
</dbReference>
<dbReference type="Gramene" id="TraesKARUn01G0087770.1">
    <property type="protein sequence ID" value="cds.TraesKARUn01G0087770.1"/>
    <property type="gene ID" value="TraesKARUn01G0087770"/>
</dbReference>
<dbReference type="Gramene" id="TraesKARUn01G0088020.1">
    <property type="protein sequence ID" value="cds.TraesKARUn01G0088020.1"/>
    <property type="gene ID" value="TraesKARUn01G0088020"/>
</dbReference>
<dbReference type="Gramene" id="TraesKARUn01G0090490.1">
    <property type="protein sequence ID" value="cds.TraesKARUn01G0090490.1"/>
    <property type="gene ID" value="TraesKARUn01G0090490"/>
</dbReference>
<dbReference type="Gramene" id="TraesKARUn01G0092330.1">
    <property type="protein sequence ID" value="cds.TraesKARUn01G0092330.1"/>
    <property type="gene ID" value="TraesKARUn01G0092330"/>
</dbReference>
<dbReference type="Gramene" id="TraesKARUn01G0095410.1">
    <property type="protein sequence ID" value="cds.TraesKARUn01G0095410.1"/>
    <property type="gene ID" value="TraesKARUn01G0095410"/>
</dbReference>
<dbReference type="Gramene" id="TraesKARUn01G0097260.1">
    <property type="protein sequence ID" value="cds.TraesKARUn01G0097260.1"/>
    <property type="gene ID" value="TraesKARUn01G0097260"/>
</dbReference>
<dbReference type="Gramene" id="TraesKARUn01G0103660.1">
    <property type="protein sequence ID" value="cds.TraesKARUn01G0103660.1"/>
    <property type="gene ID" value="TraesKARUn01G0103660"/>
</dbReference>
<dbReference type="Gramene" id="TraesKARUn01G0104500.1">
    <property type="protein sequence ID" value="cds.TraesKARUn01G0104500.1"/>
    <property type="gene ID" value="TraesKARUn01G0104500"/>
</dbReference>
<dbReference type="Gramene" id="TraesKARUn01G0108510.1">
    <property type="protein sequence ID" value="cds.TraesKARUn01G0108510.1"/>
    <property type="gene ID" value="TraesKARUn01G0108510"/>
</dbReference>
<dbReference type="Gramene" id="TraesKARUn01G0108770.1">
    <property type="protein sequence ID" value="cds.TraesKARUn01G0108770.1"/>
    <property type="gene ID" value="TraesKARUn01G0108770"/>
</dbReference>
<dbReference type="Gramene" id="TraesKARUn01G0109670.1">
    <property type="protein sequence ID" value="cds.TraesKARUn01G0109670.1"/>
    <property type="gene ID" value="TraesKARUn01G0109670"/>
</dbReference>
<dbReference type="Gramene" id="TraesKARUn01G0110920.1">
    <property type="protein sequence ID" value="cds.TraesKARUn01G0110920.1"/>
    <property type="gene ID" value="TraesKARUn01G0110920"/>
</dbReference>
<dbReference type="Gramene" id="TraesKARUn01G0113390.1">
    <property type="protein sequence ID" value="cds.TraesKARUn01G0113390.1"/>
    <property type="gene ID" value="TraesKARUn01G0113390"/>
</dbReference>
<dbReference type="Gramene" id="TraesKARUn01G0114730.1">
    <property type="protein sequence ID" value="cds.TraesKARUn01G0114730.1"/>
    <property type="gene ID" value="TraesKARUn01G0114730"/>
</dbReference>
<dbReference type="Gramene" id="TraesKARUn01G0120020.1">
    <property type="protein sequence ID" value="cds.TraesKARUn01G0120020.1"/>
    <property type="gene ID" value="TraesKARUn01G0120020"/>
</dbReference>
<dbReference type="Gramene" id="TraesKARUn01G0122510.1">
    <property type="protein sequence ID" value="cds.TraesKARUn01G0122510.1"/>
    <property type="gene ID" value="TraesKARUn01G0122510"/>
</dbReference>
<dbReference type="Gramene" id="TraesKARUn01G0122540.1">
    <property type="protein sequence ID" value="cds.TraesKARUn01G0122540.1"/>
    <property type="gene ID" value="TraesKARUn01G0122540"/>
</dbReference>
<dbReference type="Gramene" id="TraesKARUn01G0122750.1">
    <property type="protein sequence ID" value="cds.TraesKARUn01G0122750.1"/>
    <property type="gene ID" value="TraesKARUn01G0122750"/>
</dbReference>
<dbReference type="Gramene" id="TraesKARUn01G0122920.1">
    <property type="protein sequence ID" value="cds.TraesKARUn01G0122920.1"/>
    <property type="gene ID" value="TraesKARUn01G0122920"/>
</dbReference>
<dbReference type="Gramene" id="TraesKARUn01G0130090.1">
    <property type="protein sequence ID" value="cds.TraesKARUn01G0130090.1"/>
    <property type="gene ID" value="TraesKARUn01G0130090"/>
</dbReference>
<dbReference type="Gramene" id="TraesKARUn01G0130360.1">
    <property type="protein sequence ID" value="cds.TraesKARUn01G0130360.1"/>
    <property type="gene ID" value="TraesKARUn01G0130360"/>
</dbReference>
<dbReference type="Gramene" id="TraesKARUn01G0133510.1">
    <property type="protein sequence ID" value="cds.TraesKARUn01G0133510.1"/>
    <property type="gene ID" value="TraesKARUn01G0133510"/>
</dbReference>
<dbReference type="Gramene" id="TraesKARUn01G0134710.1">
    <property type="protein sequence ID" value="cds.TraesKARUn01G0134710.1"/>
    <property type="gene ID" value="TraesKARUn01G0134710"/>
</dbReference>
<dbReference type="Gramene" id="TraesKARUn01G0134910.1">
    <property type="protein sequence ID" value="cds.TraesKARUn01G0134910.1"/>
    <property type="gene ID" value="TraesKARUn01G0134910"/>
</dbReference>
<dbReference type="Gramene" id="TraesKARUn01G0141020.1">
    <property type="protein sequence ID" value="cds.TraesKARUn01G0141020.1"/>
    <property type="gene ID" value="TraesKARUn01G0141020"/>
</dbReference>
<dbReference type="Gramene" id="TraesKARUn01G0142350.1">
    <property type="protein sequence ID" value="cds.TraesKARUn01G0142350.1"/>
    <property type="gene ID" value="TraesKARUn01G0142350"/>
</dbReference>
<dbReference type="Gramene" id="TraesKARUn01G0142560.1">
    <property type="protein sequence ID" value="cds.TraesKARUn01G0142560.1"/>
    <property type="gene ID" value="TraesKARUn01G0142560"/>
</dbReference>
<dbReference type="Gramene" id="TraesKARUn01G0143010.1">
    <property type="protein sequence ID" value="cds.TraesKARUn01G0143010.1"/>
    <property type="gene ID" value="TraesKARUn01G0143010"/>
</dbReference>
<dbReference type="Gramene" id="TraesKARUn01G0143780.1">
    <property type="protein sequence ID" value="cds.TraesKARUn01G0143780.1"/>
    <property type="gene ID" value="TraesKARUn01G0143780"/>
</dbReference>
<dbReference type="Gramene" id="TraesKARUn01G0145520.1">
    <property type="protein sequence ID" value="cds.TraesKARUn01G0145520.1"/>
    <property type="gene ID" value="TraesKARUn01G0145520"/>
</dbReference>
<dbReference type="Gramene" id="TraesKARUn01G0148880.1">
    <property type="protein sequence ID" value="cds.TraesKARUn01G0148880.1"/>
    <property type="gene ID" value="TraesKARUn01G0148880"/>
</dbReference>
<dbReference type="Gramene" id="TraesKARUn01G0149090.1">
    <property type="protein sequence ID" value="cds.TraesKARUn01G0149090.1"/>
    <property type="gene ID" value="TraesKARUn01G0149090"/>
</dbReference>
<dbReference type="Gramene" id="TraesKARUn01G0149330.1">
    <property type="protein sequence ID" value="cds.TraesKARUn01G0149330.1"/>
    <property type="gene ID" value="TraesKARUn01G0149330"/>
</dbReference>
<dbReference type="Gramene" id="TraesKARUn01G0149990.1">
    <property type="protein sequence ID" value="cds.TraesKARUn01G0149990.1"/>
    <property type="gene ID" value="TraesKARUn01G0149990"/>
</dbReference>
<dbReference type="Gramene" id="TraesKARUn01G0150330.1">
    <property type="protein sequence ID" value="cds.TraesKARUn01G0150330.1"/>
    <property type="gene ID" value="TraesKARUn01G0150330"/>
</dbReference>
<dbReference type="Gramene" id="TraesKARUn01G0155720.1">
    <property type="protein sequence ID" value="cds.TraesKARUn01G0155720.1"/>
    <property type="gene ID" value="TraesKARUn01G0155720"/>
</dbReference>
<dbReference type="Gramene" id="TraesKARUn01G0157420.1">
    <property type="protein sequence ID" value="cds.TraesKARUn01G0157420.1"/>
    <property type="gene ID" value="TraesKARUn01G0157420"/>
</dbReference>
<dbReference type="Gramene" id="TraesKARUn01G0161470.1">
    <property type="protein sequence ID" value="cds.TraesKARUn01G0161470.1"/>
    <property type="gene ID" value="TraesKARUn01G0161470"/>
</dbReference>
<dbReference type="Gramene" id="TraesKARUn01G0161670.1">
    <property type="protein sequence ID" value="cds.TraesKARUn01G0161670.1"/>
    <property type="gene ID" value="TraesKARUn01G0161670"/>
</dbReference>
<dbReference type="Gramene" id="TraesKARUn01G0161960.1">
    <property type="protein sequence ID" value="cds.TraesKARUn01G0161960.1"/>
    <property type="gene ID" value="TraesKARUn01G0161960"/>
</dbReference>
<dbReference type="Gramene" id="TraesKARUn01G0167030.1">
    <property type="protein sequence ID" value="cds.TraesKARUn01G0167030.1"/>
    <property type="gene ID" value="TraesKARUn01G0167030"/>
</dbReference>
<dbReference type="Gramene" id="TraesKARUn01G0167290.1">
    <property type="protein sequence ID" value="cds.TraesKARUn01G0167290.1"/>
    <property type="gene ID" value="TraesKARUn01G0167290"/>
</dbReference>
<dbReference type="Gramene" id="TraesKARUn01G0172080.1">
    <property type="protein sequence ID" value="cds.TraesKARUn01G0172080.1"/>
    <property type="gene ID" value="TraesKARUn01G0172080"/>
</dbReference>
<dbReference type="Gramene" id="TraesKARUn01G0172480.1">
    <property type="protein sequence ID" value="cds.TraesKARUn01G0172480.1"/>
    <property type="gene ID" value="TraesKARUn01G0172480"/>
</dbReference>
<dbReference type="Gramene" id="TraesKARUn01G0172580.1">
    <property type="protein sequence ID" value="cds.TraesKARUn01G0172580.1"/>
    <property type="gene ID" value="TraesKARUn01G0172580"/>
</dbReference>
<dbReference type="Gramene" id="TraesKARUn01G0173240.1">
    <property type="protein sequence ID" value="cds.TraesKARUn01G0173240.1"/>
    <property type="gene ID" value="TraesKARUn01G0173240"/>
</dbReference>
<dbReference type="Gramene" id="TraesKARUn01G0173550.1">
    <property type="protein sequence ID" value="cds.TraesKARUn01G0173550.1"/>
    <property type="gene ID" value="TraesKARUn01G0173550"/>
</dbReference>
<dbReference type="Gramene" id="TraesKARUn01G0173820.1">
    <property type="protein sequence ID" value="cds.TraesKARUn01G0173820.1"/>
    <property type="gene ID" value="TraesKARUn01G0173820"/>
</dbReference>
<dbReference type="Gramene" id="TraesKARUn01G0173990.1">
    <property type="protein sequence ID" value="cds.TraesKARUn01G0173990.1"/>
    <property type="gene ID" value="TraesKARUn01G0173990"/>
</dbReference>
<dbReference type="Gramene" id="TraesKARUn01G0174100.1">
    <property type="protein sequence ID" value="cds.TraesKARUn01G0174100.1"/>
    <property type="gene ID" value="TraesKARUn01G0174100"/>
</dbReference>
<dbReference type="Gramene" id="TraesKARUn01G0174850.1">
    <property type="protein sequence ID" value="cds.TraesKARUn01G0174850.1"/>
    <property type="gene ID" value="TraesKARUn01G0174850"/>
</dbReference>
<dbReference type="Gramene" id="TraesKARUn01G0176350.1">
    <property type="protein sequence ID" value="cds.TraesKARUn01G0176350.1"/>
    <property type="gene ID" value="TraesKARUn01G0176350"/>
</dbReference>
<dbReference type="Gramene" id="TraesKARUn01G0177410.1">
    <property type="protein sequence ID" value="cds.TraesKARUn01G0177410.1"/>
    <property type="gene ID" value="TraesKARUn01G0177410"/>
</dbReference>
<dbReference type="Gramene" id="TraesKARUn01G0179550.1">
    <property type="protein sequence ID" value="cds.TraesKARUn01G0179550.1"/>
    <property type="gene ID" value="TraesKARUn01G0179550"/>
</dbReference>
<dbReference type="Gramene" id="TraesKARUn01G0179680.1">
    <property type="protein sequence ID" value="cds.TraesKARUn01G0179680.1"/>
    <property type="gene ID" value="TraesKARUn01G0179680"/>
</dbReference>
<dbReference type="Gramene" id="TraesKARUn01G0180480.1">
    <property type="protein sequence ID" value="cds.TraesKARUn01G0180480.1"/>
    <property type="gene ID" value="TraesKARUn01G0180480"/>
</dbReference>
<dbReference type="Gramene" id="TraesKARUn01G0182010.1">
    <property type="protein sequence ID" value="cds.TraesKARUn01G0182010.1"/>
    <property type="gene ID" value="TraesKARUn01G0182010"/>
</dbReference>
<dbReference type="Gramene" id="TraesKARUn01G0186300.1">
    <property type="protein sequence ID" value="cds.TraesKARUn01G0186300.1"/>
    <property type="gene ID" value="TraesKARUn01G0186300"/>
</dbReference>
<dbReference type="Gramene" id="TraesKARUn01G0186930.1">
    <property type="protein sequence ID" value="cds.TraesKARUn01G0186930.1"/>
    <property type="gene ID" value="TraesKARUn01G0186930"/>
</dbReference>
<dbReference type="Gramene" id="TraesKARUn01G0191660.1">
    <property type="protein sequence ID" value="cds.TraesKARUn01G0191660.1"/>
    <property type="gene ID" value="TraesKARUn01G0191660"/>
</dbReference>
<dbReference type="Gramene" id="TraesKARUn01G0192110.1">
    <property type="protein sequence ID" value="cds.TraesKARUn01G0192110.1"/>
    <property type="gene ID" value="TraesKARUn01G0192110"/>
</dbReference>
<dbReference type="Gramene" id="TraesLAC2D03G01055010.1">
    <property type="protein sequence ID" value="TraesLAC2D03G01055010.1.CDS1"/>
    <property type="gene ID" value="TraesLAC2D03G01055010"/>
</dbReference>
<dbReference type="Gramene" id="TraesLAC2D03G01245070.1">
    <property type="protein sequence ID" value="TraesLAC2D03G01245070.1.CDS1"/>
    <property type="gene ID" value="TraesLAC2D03G01245070"/>
</dbReference>
<dbReference type="Gramene" id="TraesLDM2D03G01293930.1">
    <property type="protein sequence ID" value="TraesLDM2D03G01293930.1.CDS1"/>
    <property type="gene ID" value="TraesLDM2D03G01293930"/>
</dbReference>
<dbReference type="Gramene" id="TraesLDM2D03G01305470.1">
    <property type="protein sequence ID" value="TraesLDM2D03G01305470.1.CDS1"/>
    <property type="gene ID" value="TraesLDM2D03G01305470"/>
</dbReference>
<dbReference type="Gramene" id="TraesLDM7B03G04095560.1">
    <property type="protein sequence ID" value="TraesLDM7B03G04095560.1.CDS1"/>
    <property type="gene ID" value="TraesLDM7B03G04095560"/>
</dbReference>
<dbReference type="Gramene" id="TraesLDM7B03G04275440.1">
    <property type="protein sequence ID" value="TraesLDM7B03G04275440.1.CDS1"/>
    <property type="gene ID" value="TraesLDM7B03G04275440"/>
</dbReference>
<dbReference type="Gramene" id="TraesMAC2D03G01101750.1">
    <property type="protein sequence ID" value="TraesMAC2D03G01101750.1.CDS1"/>
    <property type="gene ID" value="TraesMAC2D03G01101750"/>
</dbReference>
<dbReference type="Gramene" id="TraesMAC2D03G01291400.1">
    <property type="protein sequence ID" value="TraesMAC2D03G01291400.1.CDS1"/>
    <property type="gene ID" value="TraesMAC2D03G01291400"/>
</dbReference>
<dbReference type="Gramene" id="TraesMAC2D03G01301970.1">
    <property type="protein sequence ID" value="TraesMAC2D03G01301970.1.CDS1"/>
    <property type="gene ID" value="TraesMAC2D03G01301970"/>
</dbReference>
<dbReference type="Gramene" id="TraesNOR2D03G01119200.1">
    <property type="protein sequence ID" value="TraesNOR2D03G01119200.1.CDS1"/>
    <property type="gene ID" value="TraesNOR2D03G01119200"/>
</dbReference>
<dbReference type="Gramene" id="TraesNOR2D03G01309700.1">
    <property type="protein sequence ID" value="TraesNOR2D03G01309700.1.CDS1"/>
    <property type="gene ID" value="TraesNOR2D03G01309700"/>
</dbReference>
<dbReference type="Gramene" id="TraesNOR2D03G01318410.1">
    <property type="protein sequence ID" value="TraesNOR2D03G01318410.1.CDS1"/>
    <property type="gene ID" value="TraesNOR2D03G01318410"/>
</dbReference>
<dbReference type="Gramene" id="TraesPARA_EIv1.0_0642540.1">
    <property type="protein sequence ID" value="TraesPARA_EIv1.0_0642540.1.CDS1"/>
    <property type="gene ID" value="TraesPARA_EIv1.0_0642540"/>
</dbReference>
<dbReference type="Gramene" id="TraesRN1A0100595400.1">
    <property type="protein sequence ID" value="TraesRN1A0100595400.1"/>
    <property type="gene ID" value="TraesRN1A0100595400"/>
</dbReference>
<dbReference type="Gramene" id="TraesRN2D0100173700.1">
    <property type="protein sequence ID" value="TraesRN2D0100173700.1"/>
    <property type="gene ID" value="TraesRN2D0100173700"/>
</dbReference>
<dbReference type="Gramene" id="TraesRN3A0101018500.1">
    <property type="protein sequence ID" value="TraesRN3A0101018500.1"/>
    <property type="gene ID" value="TraesRN3A0101018500"/>
</dbReference>
<dbReference type="Gramene" id="TraesRN5B0100619400.1">
    <property type="protein sequence ID" value="TraesRN5B0100619400.1"/>
    <property type="gene ID" value="TraesRN5B0100619400"/>
</dbReference>
<dbReference type="Gramene" id="TraesRN7D0100597000.1">
    <property type="protein sequence ID" value="TraesRN7D0100597000.1"/>
    <property type="gene ID" value="TraesRN7D0100597000"/>
</dbReference>
<dbReference type="Gramene" id="TraesRN7D0100597100.1">
    <property type="protein sequence ID" value="TraesRN7D0100597100.1"/>
    <property type="gene ID" value="TraesRN7D0100597100"/>
</dbReference>
<dbReference type="Gramene" id="TraesROB_scaffold_056383_01G000300.1">
    <property type="protein sequence ID" value="TraesROB_scaffold_056383_01G000300.1"/>
    <property type="gene ID" value="TraesROB_scaffold_056383_01G000300"/>
</dbReference>
<dbReference type="Gramene" id="TraesSTA2D03G01281940.1">
    <property type="protein sequence ID" value="TraesSTA2D03G01281940.1.CDS1"/>
    <property type="gene ID" value="TraesSTA2D03G01281940"/>
</dbReference>
<dbReference type="Gramene" id="TraesSTA2D03G01294580.1">
    <property type="protein sequence ID" value="TraesSTA2D03G01294580.1.CDS1"/>
    <property type="gene ID" value="TraesSTA2D03G01294580"/>
</dbReference>
<dbReference type="Gramene" id="TraesSYM2D03G01117320.1">
    <property type="protein sequence ID" value="TraesSYM2D03G01117320.1.CDS1"/>
    <property type="gene ID" value="TraesSYM2D03G01117320"/>
</dbReference>
<dbReference type="Gramene" id="TraesSYM2D03G01323500.1">
    <property type="protein sequence ID" value="TraesSYM2D03G01323500.1.CDS1"/>
    <property type="gene ID" value="TraesSYM2D03G01323500"/>
</dbReference>
<dbReference type="Gramene" id="TraesSYM5B03G02909970.1">
    <property type="protein sequence ID" value="TraesSYM5B03G02909970.1.CDS1"/>
    <property type="gene ID" value="TraesSYM5B03G02909970"/>
</dbReference>
<dbReference type="Gramene" id="TraesSYM7B03G04083880.1">
    <property type="protein sequence ID" value="TraesSYM7B03G04083880.1.CDS1"/>
    <property type="gene ID" value="TraesSYM7B03G04083880"/>
</dbReference>
<dbReference type="Gramene" id="TraesSYM7B03G04117470.1">
    <property type="protein sequence ID" value="TraesSYM7B03G04117470.1.CDS1"/>
    <property type="gene ID" value="TraesSYM7B03G04117470"/>
</dbReference>
<dbReference type="Gramene" id="TraesWEE_scaffold_192274_01G000300.1">
    <property type="protein sequence ID" value="TraesWEE_scaffold_192274_01G000300.1"/>
    <property type="gene ID" value="TraesWEE_scaffold_192274_01G000300"/>
</dbReference>
<dbReference type="KEGG" id="taes:803141"/>
<dbReference type="eggNOG" id="KOG4669">
    <property type="taxonomic scope" value="Eukaryota"/>
</dbReference>
<dbReference type="HOGENOM" id="CLU_144724_1_1_1"/>
<dbReference type="OMA" id="FDVWLSR"/>
<dbReference type="OrthoDB" id="688188at2759"/>
<dbReference type="Proteomes" id="UP000019116">
    <property type="component" value="Chloroplast"/>
</dbReference>
<dbReference type="ExpressionAtlas" id="P69379">
    <property type="expression patterns" value="differential"/>
</dbReference>
<dbReference type="GO" id="GO:0009535">
    <property type="term" value="C:chloroplast thylakoid membrane"/>
    <property type="evidence" value="ECO:0007669"/>
    <property type="project" value="UniProtKB-SubCell"/>
</dbReference>
<dbReference type="GO" id="GO:0030964">
    <property type="term" value="C:NADH dehydrogenase complex"/>
    <property type="evidence" value="ECO:0000318"/>
    <property type="project" value="GO_Central"/>
</dbReference>
<dbReference type="GO" id="GO:0016655">
    <property type="term" value="F:oxidoreductase activity, acting on NAD(P)H, quinone or similar compound as acceptor"/>
    <property type="evidence" value="ECO:0007669"/>
    <property type="project" value="UniProtKB-UniRule"/>
</dbReference>
<dbReference type="GO" id="GO:0048038">
    <property type="term" value="F:quinone binding"/>
    <property type="evidence" value="ECO:0007669"/>
    <property type="project" value="UniProtKB-KW"/>
</dbReference>
<dbReference type="GO" id="GO:0042773">
    <property type="term" value="P:ATP synthesis coupled electron transport"/>
    <property type="evidence" value="ECO:0007669"/>
    <property type="project" value="InterPro"/>
</dbReference>
<dbReference type="GO" id="GO:0019684">
    <property type="term" value="P:photosynthesis, light reaction"/>
    <property type="evidence" value="ECO:0007669"/>
    <property type="project" value="UniProtKB-UniRule"/>
</dbReference>
<dbReference type="FunFam" id="1.10.287.3510:FF:000001">
    <property type="entry name" value="NADH-quinone oxidoreductase subunit K"/>
    <property type="match status" value="1"/>
</dbReference>
<dbReference type="Gene3D" id="1.10.287.3510">
    <property type="match status" value="1"/>
</dbReference>
<dbReference type="HAMAP" id="MF_01456">
    <property type="entry name" value="NDH1_NuoK"/>
    <property type="match status" value="1"/>
</dbReference>
<dbReference type="InterPro" id="IPR001133">
    <property type="entry name" value="NADH_UbQ_OxRdtase_chain4L/K"/>
</dbReference>
<dbReference type="InterPro" id="IPR039428">
    <property type="entry name" value="NUOK/Mnh_C1-like"/>
</dbReference>
<dbReference type="NCBIfam" id="NF004320">
    <property type="entry name" value="PRK05715.1-2"/>
    <property type="match status" value="1"/>
</dbReference>
<dbReference type="PANTHER" id="PTHR11434:SF16">
    <property type="entry name" value="NADH-UBIQUINONE OXIDOREDUCTASE CHAIN 4L"/>
    <property type="match status" value="1"/>
</dbReference>
<dbReference type="PANTHER" id="PTHR11434">
    <property type="entry name" value="NADH-UBIQUINONE OXIDOREDUCTASE SUBUNIT ND4L"/>
    <property type="match status" value="1"/>
</dbReference>
<dbReference type="Pfam" id="PF00420">
    <property type="entry name" value="Oxidored_q2"/>
    <property type="match status" value="1"/>
</dbReference>
<gene>
    <name evidence="1" type="primary">ndhE</name>
    <name type="synonym">ndh4L</name>
</gene>
<feature type="chain" id="PRO_0000118518" description="NAD(P)H-quinone oxidoreductase subunit 4L, chloroplastic">
    <location>
        <begin position="1"/>
        <end position="101"/>
    </location>
</feature>
<feature type="transmembrane region" description="Helical" evidence="1">
    <location>
        <begin position="2"/>
        <end position="22"/>
    </location>
</feature>
<feature type="transmembrane region" description="Helical" evidence="1">
    <location>
        <begin position="32"/>
        <end position="52"/>
    </location>
</feature>
<feature type="transmembrane region" description="Helical" evidence="1">
    <location>
        <begin position="61"/>
        <end position="81"/>
    </location>
</feature>
<geneLocation type="chloroplast"/>
<reference key="1">
    <citation type="journal article" date="2000" name="Plant Mol. Biol. Rep.">
        <title>Chinese spring wheat (Triticum aestivum L.) chloroplast genome: complete sequence and contig clones.</title>
        <authorList>
            <person name="Ogihara Y."/>
            <person name="Isono K."/>
            <person name="Kojima T."/>
            <person name="Endo A."/>
            <person name="Hanaoka M."/>
            <person name="Shiina T."/>
            <person name="Terachi T."/>
            <person name="Utsugi S."/>
            <person name="Murata M."/>
            <person name="Mori N."/>
            <person name="Takumi S."/>
            <person name="Ikeo K."/>
            <person name="Gojobori T."/>
            <person name="Murai R."/>
            <person name="Murai K."/>
            <person name="Matsuoka Y."/>
            <person name="Ohnishi Y."/>
            <person name="Tajiri H."/>
            <person name="Tsunewaki K."/>
        </authorList>
    </citation>
    <scope>NUCLEOTIDE SEQUENCE [LARGE SCALE GENOMIC DNA]</scope>
    <source>
        <strain>cv. Chinese Spring</strain>
    </source>
</reference>
<sequence length="101" mass="11303">MMFEHVLFLSVYLFSIGIYGLITSRNMVRALICLELILNSINLNLVTFSDLFDSRQLKGDIFAIFVIALAAAEAAIGLSILSSIHRNRKSTRINQSNLLNN</sequence>